<name>PUR5_STAA2</name>
<accession>A6U0N9</accession>
<organism>
    <name type="scientific">Staphylococcus aureus (strain JH1)</name>
    <dbReference type="NCBI Taxonomy" id="359787"/>
    <lineage>
        <taxon>Bacteria</taxon>
        <taxon>Bacillati</taxon>
        <taxon>Bacillota</taxon>
        <taxon>Bacilli</taxon>
        <taxon>Bacillales</taxon>
        <taxon>Staphylococcaceae</taxon>
        <taxon>Staphylococcus</taxon>
    </lineage>
</organism>
<proteinExistence type="inferred from homology"/>
<evidence type="ECO:0000255" key="1">
    <source>
        <dbReference type="HAMAP-Rule" id="MF_00741"/>
    </source>
</evidence>
<comment type="catalytic activity">
    <reaction evidence="1">
        <text>2-formamido-N(1)-(5-O-phospho-beta-D-ribosyl)acetamidine + ATP = 5-amino-1-(5-phospho-beta-D-ribosyl)imidazole + ADP + phosphate + H(+)</text>
        <dbReference type="Rhea" id="RHEA:23032"/>
        <dbReference type="ChEBI" id="CHEBI:15378"/>
        <dbReference type="ChEBI" id="CHEBI:30616"/>
        <dbReference type="ChEBI" id="CHEBI:43474"/>
        <dbReference type="ChEBI" id="CHEBI:137981"/>
        <dbReference type="ChEBI" id="CHEBI:147287"/>
        <dbReference type="ChEBI" id="CHEBI:456216"/>
        <dbReference type="EC" id="6.3.3.1"/>
    </reaction>
</comment>
<comment type="pathway">
    <text evidence="1">Purine metabolism; IMP biosynthesis via de novo pathway; 5-amino-1-(5-phospho-D-ribosyl)imidazole from N(2)-formyl-N(1)-(5-phospho-D-ribosyl)glycinamide: step 2/2.</text>
</comment>
<comment type="subcellular location">
    <subcellularLocation>
        <location evidence="1">Cytoplasm</location>
    </subcellularLocation>
</comment>
<comment type="similarity">
    <text evidence="1">Belongs to the AIR synthase family.</text>
</comment>
<sequence length="342" mass="36989">MSKAYEQSGVNIHAGYEAVERMSSHVKRTMRKEVIGGLGGFGATFDLSQLNMTAPVLVSGTDGVGTKLKLAIDYGKHDSIGIDAVAMCVNDILTTGAEPLYFLDYIATNKVVPEVIEQIVKGISDACVETNTALIGGETAEMGEMYHEGEYDVAGFAVGAVEKDDYVDGSEVKEGQVVIGLASSGIHSNGYSLVRKLINESGIDLASNFDNRPFIDVFLEPTKLYVKPVLALKKEVSIKAMNHITGGGFYENIPRALPAGYAARIDTTSFPTPKIFDWLQQQGNIDTNEMYNIFNMGIGYTVIVDEKDASRALKILAEQNVEAYQIGHIVKNESTAIELLGV</sequence>
<reference key="1">
    <citation type="submission" date="2007-06" db="EMBL/GenBank/DDBJ databases">
        <title>Complete sequence of chromosome of Staphylococcus aureus subsp. aureus JH1.</title>
        <authorList>
            <consortium name="US DOE Joint Genome Institute"/>
            <person name="Copeland A."/>
            <person name="Lucas S."/>
            <person name="Lapidus A."/>
            <person name="Barry K."/>
            <person name="Detter J.C."/>
            <person name="Glavina del Rio T."/>
            <person name="Hammon N."/>
            <person name="Israni S."/>
            <person name="Dalin E."/>
            <person name="Tice H."/>
            <person name="Pitluck S."/>
            <person name="Chain P."/>
            <person name="Malfatti S."/>
            <person name="Shin M."/>
            <person name="Vergez L."/>
            <person name="Schmutz J."/>
            <person name="Larimer F."/>
            <person name="Land M."/>
            <person name="Hauser L."/>
            <person name="Kyrpides N."/>
            <person name="Ivanova N."/>
            <person name="Tomasz A."/>
            <person name="Richardson P."/>
        </authorList>
    </citation>
    <scope>NUCLEOTIDE SEQUENCE [LARGE SCALE GENOMIC DNA]</scope>
    <source>
        <strain>JH1</strain>
    </source>
</reference>
<protein>
    <recommendedName>
        <fullName evidence="1">Phosphoribosylformylglycinamidine cyclo-ligase</fullName>
        <ecNumber evidence="1">6.3.3.1</ecNumber>
    </recommendedName>
    <alternativeName>
        <fullName evidence="1">AIR synthase</fullName>
    </alternativeName>
    <alternativeName>
        <fullName evidence="1">AIRS</fullName>
    </alternativeName>
    <alternativeName>
        <fullName evidence="1">Phosphoribosyl-aminoimidazole synthetase</fullName>
    </alternativeName>
</protein>
<dbReference type="EC" id="6.3.3.1" evidence="1"/>
<dbReference type="EMBL" id="CP000736">
    <property type="protein sequence ID" value="ABR52007.1"/>
    <property type="molecule type" value="Genomic_DNA"/>
</dbReference>
<dbReference type="SMR" id="A6U0N9"/>
<dbReference type="KEGG" id="sah:SaurJH1_1153"/>
<dbReference type="HOGENOM" id="CLU_047116_0_0_9"/>
<dbReference type="UniPathway" id="UPA00074">
    <property type="reaction ID" value="UER00129"/>
</dbReference>
<dbReference type="GO" id="GO:0005829">
    <property type="term" value="C:cytosol"/>
    <property type="evidence" value="ECO:0007669"/>
    <property type="project" value="TreeGrafter"/>
</dbReference>
<dbReference type="GO" id="GO:0005524">
    <property type="term" value="F:ATP binding"/>
    <property type="evidence" value="ECO:0007669"/>
    <property type="project" value="UniProtKB-KW"/>
</dbReference>
<dbReference type="GO" id="GO:0004637">
    <property type="term" value="F:phosphoribosylamine-glycine ligase activity"/>
    <property type="evidence" value="ECO:0007669"/>
    <property type="project" value="TreeGrafter"/>
</dbReference>
<dbReference type="GO" id="GO:0004641">
    <property type="term" value="F:phosphoribosylformylglycinamidine cyclo-ligase activity"/>
    <property type="evidence" value="ECO:0007669"/>
    <property type="project" value="UniProtKB-UniRule"/>
</dbReference>
<dbReference type="GO" id="GO:0006189">
    <property type="term" value="P:'de novo' IMP biosynthetic process"/>
    <property type="evidence" value="ECO:0007669"/>
    <property type="project" value="UniProtKB-UniRule"/>
</dbReference>
<dbReference type="GO" id="GO:0046084">
    <property type="term" value="P:adenine biosynthetic process"/>
    <property type="evidence" value="ECO:0007669"/>
    <property type="project" value="TreeGrafter"/>
</dbReference>
<dbReference type="CDD" id="cd02196">
    <property type="entry name" value="PurM"/>
    <property type="match status" value="1"/>
</dbReference>
<dbReference type="FunFam" id="3.30.1330.10:FF:000001">
    <property type="entry name" value="Phosphoribosylformylglycinamidine cyclo-ligase"/>
    <property type="match status" value="1"/>
</dbReference>
<dbReference type="FunFam" id="3.90.650.10:FF:000001">
    <property type="entry name" value="Phosphoribosylformylglycinamidine cyclo-ligase"/>
    <property type="match status" value="1"/>
</dbReference>
<dbReference type="Gene3D" id="3.90.650.10">
    <property type="entry name" value="PurM-like C-terminal domain"/>
    <property type="match status" value="1"/>
</dbReference>
<dbReference type="Gene3D" id="3.30.1330.10">
    <property type="entry name" value="PurM-like, N-terminal domain"/>
    <property type="match status" value="1"/>
</dbReference>
<dbReference type="HAMAP" id="MF_00741">
    <property type="entry name" value="AIRS"/>
    <property type="match status" value="1"/>
</dbReference>
<dbReference type="InterPro" id="IPR010918">
    <property type="entry name" value="PurM-like_C_dom"/>
</dbReference>
<dbReference type="InterPro" id="IPR036676">
    <property type="entry name" value="PurM-like_C_sf"/>
</dbReference>
<dbReference type="InterPro" id="IPR016188">
    <property type="entry name" value="PurM-like_N"/>
</dbReference>
<dbReference type="InterPro" id="IPR036921">
    <property type="entry name" value="PurM-like_N_sf"/>
</dbReference>
<dbReference type="InterPro" id="IPR004733">
    <property type="entry name" value="PurM_cligase"/>
</dbReference>
<dbReference type="NCBIfam" id="TIGR00878">
    <property type="entry name" value="purM"/>
    <property type="match status" value="1"/>
</dbReference>
<dbReference type="PANTHER" id="PTHR10520:SF12">
    <property type="entry name" value="TRIFUNCTIONAL PURINE BIOSYNTHETIC PROTEIN ADENOSINE-3"/>
    <property type="match status" value="1"/>
</dbReference>
<dbReference type="PANTHER" id="PTHR10520">
    <property type="entry name" value="TRIFUNCTIONAL PURINE BIOSYNTHETIC PROTEIN ADENOSINE-3-RELATED"/>
    <property type="match status" value="1"/>
</dbReference>
<dbReference type="Pfam" id="PF00586">
    <property type="entry name" value="AIRS"/>
    <property type="match status" value="1"/>
</dbReference>
<dbReference type="Pfam" id="PF02769">
    <property type="entry name" value="AIRS_C"/>
    <property type="match status" value="1"/>
</dbReference>
<dbReference type="SUPFAM" id="SSF56042">
    <property type="entry name" value="PurM C-terminal domain-like"/>
    <property type="match status" value="1"/>
</dbReference>
<dbReference type="SUPFAM" id="SSF55326">
    <property type="entry name" value="PurM N-terminal domain-like"/>
    <property type="match status" value="1"/>
</dbReference>
<keyword id="KW-0067">ATP-binding</keyword>
<keyword id="KW-0963">Cytoplasm</keyword>
<keyword id="KW-0436">Ligase</keyword>
<keyword id="KW-0547">Nucleotide-binding</keyword>
<keyword id="KW-0658">Purine biosynthesis</keyword>
<gene>
    <name evidence="1" type="primary">purM</name>
    <name type="ordered locus">SaurJH1_1153</name>
</gene>
<feature type="chain" id="PRO_1000083467" description="Phosphoribosylformylglycinamidine cyclo-ligase">
    <location>
        <begin position="1"/>
        <end position="342"/>
    </location>
</feature>